<comment type="function">
    <text>Broad spectrum bactericidal agent.</text>
</comment>
<comment type="biophysicochemical properties">
    <temperatureDependence>
        <text>Thermostable.</text>
    </temperatureDependence>
</comment>
<comment type="subcellular location">
    <subcellularLocation>
        <location>Secreted</location>
    </subcellularLocation>
</comment>
<comment type="similarity">
    <text evidence="3">Belongs to the cathelicidin family.</text>
</comment>
<proteinExistence type="evidence at protein level"/>
<sequence>METQRASLSLGRRSLWLLLLGLVLASASAQALSYREAVLRAVDQLNEKSSEANLYRLLELDPPPKQDDENSNIPKPVSFRVKETVCPRTSQQPAEQCDFKENGLLKECVGTVTLDQVGNNFDITCAEPQSVRGLRRLGRKIAHGVKKYGPTVLRIIRIAG</sequence>
<organism>
    <name type="scientific">Ovis aries</name>
    <name type="common">Sheep</name>
    <dbReference type="NCBI Taxonomy" id="9940"/>
    <lineage>
        <taxon>Eukaryota</taxon>
        <taxon>Metazoa</taxon>
        <taxon>Chordata</taxon>
        <taxon>Craniata</taxon>
        <taxon>Vertebrata</taxon>
        <taxon>Euteleostomi</taxon>
        <taxon>Mammalia</taxon>
        <taxon>Eutheria</taxon>
        <taxon>Laurasiatheria</taxon>
        <taxon>Artiodactyla</taxon>
        <taxon>Ruminantia</taxon>
        <taxon>Pecora</taxon>
        <taxon>Bovidae</taxon>
        <taxon>Caprinae</taxon>
        <taxon>Ovis</taxon>
    </lineage>
</organism>
<keyword id="KW-0044">Antibiotic</keyword>
<keyword id="KW-0929">Antimicrobial</keyword>
<keyword id="KW-1015">Disulfide bond</keyword>
<keyword id="KW-1185">Reference proteome</keyword>
<keyword id="KW-0964">Secreted</keyword>
<keyword id="KW-0732">Signal</keyword>
<name>SC52_SHEEP</name>
<protein>
    <recommendedName>
        <fullName>Cathelin-related peptide SC5</fullName>
    </recommendedName>
    <alternativeName>
        <fullName>Antibacterial peptide SMAP-29</fullName>
    </alternativeName>
    <alternativeName>
        <fullName>Myeloid antibacterial peptide MAP-29</fullName>
    </alternativeName>
</protein>
<reference key="1">
    <citation type="journal article" date="1995" name="FEBS Lett.">
        <title>Molecular analysis of the sheep cathelin family reveals a novel antimicrobial peptide.</title>
        <authorList>
            <person name="Mahoney M.M."/>
            <person name="Lee A.Y."/>
            <person name="Brezinski-Caliguri D.J."/>
            <person name="Huttner K.M."/>
        </authorList>
    </citation>
    <scope>NUCLEOTIDE SEQUENCE [MRNA]</scope>
    <source>
        <tissue>Bone marrow</tissue>
    </source>
</reference>
<reference key="2">
    <citation type="journal article" date="1995" name="FEBS Lett.">
        <title>cDNA sequences of three sheep myeloid cathelicidins.</title>
        <authorList>
            <person name="Bagella L."/>
            <person name="Scocchi M."/>
            <person name="Zanetti M."/>
        </authorList>
    </citation>
    <scope>NUCLEOTIDE SEQUENCE [MRNA]</scope>
    <source>
        <tissue>Bone marrow</tissue>
    </source>
</reference>
<evidence type="ECO:0000250" key="1"/>
<evidence type="ECO:0000255" key="2"/>
<evidence type="ECO:0000305" key="3"/>
<dbReference type="EMBL" id="X92758">
    <property type="protein sequence ID" value="CAA63413.1"/>
    <property type="molecule type" value="mRNA"/>
</dbReference>
<dbReference type="EMBL" id="L46854">
    <property type="protein sequence ID" value="AAA85470.1"/>
    <property type="molecule type" value="mRNA"/>
</dbReference>
<dbReference type="PIR" id="S68228">
    <property type="entry name" value="S68228"/>
</dbReference>
<dbReference type="PIR" id="S68412">
    <property type="entry name" value="S68412"/>
</dbReference>
<dbReference type="RefSeq" id="NP_001009406.1">
    <property type="nucleotide sequence ID" value="NM_001009406.1"/>
</dbReference>
<dbReference type="BMRB" id="P49929"/>
<dbReference type="SMR" id="P49929"/>
<dbReference type="STRING" id="9940.ENSOARP00000002274"/>
<dbReference type="PaxDb" id="9940-ENSOARP00000002274"/>
<dbReference type="GeneID" id="443424"/>
<dbReference type="KEGG" id="oas:443424"/>
<dbReference type="CTD" id="443424"/>
<dbReference type="eggNOG" id="ENOG502SAES">
    <property type="taxonomic scope" value="Eukaryota"/>
</dbReference>
<dbReference type="OrthoDB" id="9930485at2759"/>
<dbReference type="Proteomes" id="UP000002356">
    <property type="component" value="Unplaced"/>
</dbReference>
<dbReference type="GO" id="GO:0005615">
    <property type="term" value="C:extracellular space"/>
    <property type="evidence" value="ECO:0007669"/>
    <property type="project" value="TreeGrafter"/>
</dbReference>
<dbReference type="GO" id="GO:0001530">
    <property type="term" value="F:lipopolysaccharide binding"/>
    <property type="evidence" value="ECO:0007669"/>
    <property type="project" value="TreeGrafter"/>
</dbReference>
<dbReference type="GO" id="GO:0140367">
    <property type="term" value="P:antibacterial innate immune response"/>
    <property type="evidence" value="ECO:0000315"/>
    <property type="project" value="GO_Central"/>
</dbReference>
<dbReference type="GO" id="GO:0061844">
    <property type="term" value="P:antimicrobial humoral immune response mediated by antimicrobial peptide"/>
    <property type="evidence" value="ECO:0007669"/>
    <property type="project" value="TreeGrafter"/>
</dbReference>
<dbReference type="GO" id="GO:0050829">
    <property type="term" value="P:defense response to Gram-negative bacterium"/>
    <property type="evidence" value="ECO:0007669"/>
    <property type="project" value="TreeGrafter"/>
</dbReference>
<dbReference type="GO" id="GO:0050830">
    <property type="term" value="P:defense response to Gram-positive bacterium"/>
    <property type="evidence" value="ECO:0007669"/>
    <property type="project" value="TreeGrafter"/>
</dbReference>
<dbReference type="FunFam" id="3.10.450.10:FF:000003">
    <property type="entry name" value="Cathelicidin antimicrobial peptide"/>
    <property type="match status" value="1"/>
</dbReference>
<dbReference type="Gene3D" id="3.10.450.10">
    <property type="match status" value="1"/>
</dbReference>
<dbReference type="InterPro" id="IPR001894">
    <property type="entry name" value="Cathelicidin-like"/>
</dbReference>
<dbReference type="InterPro" id="IPR018216">
    <property type="entry name" value="Cathelicidin_CS"/>
</dbReference>
<dbReference type="InterPro" id="IPR046350">
    <property type="entry name" value="Cystatin_sf"/>
</dbReference>
<dbReference type="PANTHER" id="PTHR10206">
    <property type="entry name" value="CATHELICIDIN"/>
    <property type="match status" value="1"/>
</dbReference>
<dbReference type="PANTHER" id="PTHR10206:SF2">
    <property type="entry name" value="CATHELICIDIN ANTIMICROBIAL PEPTIDE"/>
    <property type="match status" value="1"/>
</dbReference>
<dbReference type="Pfam" id="PF00666">
    <property type="entry name" value="Cathelicidins"/>
    <property type="match status" value="1"/>
</dbReference>
<dbReference type="SUPFAM" id="SSF54403">
    <property type="entry name" value="Cystatin/monellin"/>
    <property type="match status" value="1"/>
</dbReference>
<dbReference type="PROSITE" id="PS00946">
    <property type="entry name" value="CATHELICIDINS_1"/>
    <property type="match status" value="1"/>
</dbReference>
<dbReference type="PROSITE" id="PS00947">
    <property type="entry name" value="CATHELICIDINS_2"/>
    <property type="match status" value="1"/>
</dbReference>
<feature type="signal peptide" evidence="2">
    <location>
        <begin position="1"/>
        <end position="29"/>
    </location>
</feature>
<feature type="propeptide" id="PRO_0000004760" evidence="1">
    <location>
        <begin position="30"/>
        <end position="131"/>
    </location>
</feature>
<feature type="peptide" id="PRO_0000004761" description="Cathelin-related peptide SC5">
    <location>
        <begin position="132"/>
        <end position="160"/>
    </location>
</feature>
<feature type="disulfide bond" evidence="1">
    <location>
        <begin position="86"/>
        <end position="97"/>
    </location>
</feature>
<feature type="disulfide bond" evidence="1">
    <location>
        <begin position="108"/>
        <end position="125"/>
    </location>
</feature>
<feature type="sequence conflict" description="In Ref. 2; AAA85470." evidence="3" ref="2">
    <original>S</original>
    <variation>R</variation>
    <location>
        <position position="28"/>
    </location>
</feature>
<accession>P49929</accession>